<proteinExistence type="inferred from homology"/>
<name>EFG_SALPB</name>
<feature type="chain" id="PRO_1000074971" description="Elongation factor G">
    <location>
        <begin position="1"/>
        <end position="704"/>
    </location>
</feature>
<feature type="domain" description="tr-type G">
    <location>
        <begin position="8"/>
        <end position="290"/>
    </location>
</feature>
<feature type="binding site" evidence="1">
    <location>
        <begin position="17"/>
        <end position="24"/>
    </location>
    <ligand>
        <name>GTP</name>
        <dbReference type="ChEBI" id="CHEBI:37565"/>
    </ligand>
</feature>
<feature type="binding site" evidence="1">
    <location>
        <begin position="88"/>
        <end position="92"/>
    </location>
    <ligand>
        <name>GTP</name>
        <dbReference type="ChEBI" id="CHEBI:37565"/>
    </ligand>
</feature>
<feature type="binding site" evidence="1">
    <location>
        <begin position="142"/>
        <end position="145"/>
    </location>
    <ligand>
        <name>GTP</name>
        <dbReference type="ChEBI" id="CHEBI:37565"/>
    </ligand>
</feature>
<comment type="function">
    <text evidence="1">Catalyzes the GTP-dependent ribosomal translocation step during translation elongation. During this step, the ribosome changes from the pre-translocational (PRE) to the post-translocational (POST) state as the newly formed A-site-bound peptidyl-tRNA and P-site-bound deacylated tRNA move to the P and E sites, respectively. Catalyzes the coordinated movement of the two tRNA molecules, the mRNA and conformational changes in the ribosome.</text>
</comment>
<comment type="subcellular location">
    <subcellularLocation>
        <location evidence="1">Cytoplasm</location>
    </subcellularLocation>
</comment>
<comment type="similarity">
    <text evidence="1">Belongs to the TRAFAC class translation factor GTPase superfamily. Classic translation factor GTPase family. EF-G/EF-2 subfamily.</text>
</comment>
<gene>
    <name evidence="1" type="primary">fusA</name>
    <name type="ordered locus">SPAB_04289</name>
</gene>
<accession>A9MT06</accession>
<reference key="1">
    <citation type="submission" date="2007-11" db="EMBL/GenBank/DDBJ databases">
        <authorList>
            <consortium name="The Salmonella enterica serovar Paratyphi B Genome Sequencing Project"/>
            <person name="McClelland M."/>
            <person name="Sanderson E.K."/>
            <person name="Porwollik S."/>
            <person name="Spieth J."/>
            <person name="Clifton W.S."/>
            <person name="Fulton R."/>
            <person name="Cordes M."/>
            <person name="Wollam A."/>
            <person name="Shah N."/>
            <person name="Pepin K."/>
            <person name="Bhonagiri V."/>
            <person name="Nash W."/>
            <person name="Johnson M."/>
            <person name="Thiruvilangam P."/>
            <person name="Wilson R."/>
        </authorList>
    </citation>
    <scope>NUCLEOTIDE SEQUENCE [LARGE SCALE GENOMIC DNA]</scope>
    <source>
        <strain>ATCC BAA-1250 / SPB7</strain>
    </source>
</reference>
<evidence type="ECO:0000255" key="1">
    <source>
        <dbReference type="HAMAP-Rule" id="MF_00054"/>
    </source>
</evidence>
<keyword id="KW-0963">Cytoplasm</keyword>
<keyword id="KW-0251">Elongation factor</keyword>
<keyword id="KW-0342">GTP-binding</keyword>
<keyword id="KW-0547">Nucleotide-binding</keyword>
<keyword id="KW-0648">Protein biosynthesis</keyword>
<protein>
    <recommendedName>
        <fullName evidence="1">Elongation factor G</fullName>
        <shortName evidence="1">EF-G</shortName>
    </recommendedName>
</protein>
<organism>
    <name type="scientific">Salmonella paratyphi B (strain ATCC BAA-1250 / SPB7)</name>
    <dbReference type="NCBI Taxonomy" id="1016998"/>
    <lineage>
        <taxon>Bacteria</taxon>
        <taxon>Pseudomonadati</taxon>
        <taxon>Pseudomonadota</taxon>
        <taxon>Gammaproteobacteria</taxon>
        <taxon>Enterobacterales</taxon>
        <taxon>Enterobacteriaceae</taxon>
        <taxon>Salmonella</taxon>
    </lineage>
</organism>
<sequence length="704" mass="77599">MARTTPIARYRNIGISAHIDAGKTTTTERILFYTGVNHKIGEVHDGAATMDWMEQEQERGITITSAATTAFWSGMAKQYEPHRINIIDTPGHVDFTIEVERSMRVLDGAVMVYCAVGGVQPQSETVWRQANKYKVPRIAFVNKMDRMGANFLKVVGQIKTRLGANPVPLQLAIGAEEGFTGVVDLVKMKAINWNDADQGVTFEYEDIPADMQDLANEWHQNLIESAAEASEELMEKYLGGEELTEEEIKQALRQRVLNNEIILVTCGSAFKNKGVQAMLDAVIDYLPSPVDVPAINGILDDGKDTPAERHASDDEPFSALAFKIATDPFVGNLTFFRVYSGVVNSGDTVLNSVKTARERFGRIVQMHANKREEIKEVRAGDIAAAIGLKDVTTGDTLCDPENPIILERMEFPEPVISIAVEPKTKADQEKMGLALGRLAKEDPSFRVWTDEESNQTIIAGMGELHLDIIVDRMKREFNVEANVGKPQVAYREAIRAKVTDIEGKHAKQSGGRGQYGHVVIDMYPLEPGSNPKGYEFINDIKGGVIPGEYIPAVDKGIQEQLKSGPLAGYPVVDLGVRLHFGSYHDVDSSELAFKLAASIAFKEGFKKAKPVLLEPIMKVEVETPEENTGDVIGDLSRRRGMLKGQESEVTGVKIHAEVPLSEMFGYATQLRSLTKGRASYTMEFLKYDDAPNNVAQAVIEARGK</sequence>
<dbReference type="EMBL" id="CP000886">
    <property type="protein sequence ID" value="ABX69606.1"/>
    <property type="molecule type" value="Genomic_DNA"/>
</dbReference>
<dbReference type="RefSeq" id="WP_000124693.1">
    <property type="nucleotide sequence ID" value="NC_010102.1"/>
</dbReference>
<dbReference type="SMR" id="A9MT06"/>
<dbReference type="KEGG" id="spq:SPAB_04289"/>
<dbReference type="PATRIC" id="fig|1016998.12.peg.4035"/>
<dbReference type="HOGENOM" id="CLU_002794_4_1_6"/>
<dbReference type="BioCyc" id="SENT1016998:SPAB_RS17465-MONOMER"/>
<dbReference type="Proteomes" id="UP000008556">
    <property type="component" value="Chromosome"/>
</dbReference>
<dbReference type="GO" id="GO:0005737">
    <property type="term" value="C:cytoplasm"/>
    <property type="evidence" value="ECO:0007669"/>
    <property type="project" value="UniProtKB-SubCell"/>
</dbReference>
<dbReference type="GO" id="GO:0005525">
    <property type="term" value="F:GTP binding"/>
    <property type="evidence" value="ECO:0007669"/>
    <property type="project" value="UniProtKB-UniRule"/>
</dbReference>
<dbReference type="GO" id="GO:0003924">
    <property type="term" value="F:GTPase activity"/>
    <property type="evidence" value="ECO:0007669"/>
    <property type="project" value="InterPro"/>
</dbReference>
<dbReference type="GO" id="GO:0097216">
    <property type="term" value="F:guanosine tetraphosphate binding"/>
    <property type="evidence" value="ECO:0007669"/>
    <property type="project" value="UniProtKB-ARBA"/>
</dbReference>
<dbReference type="GO" id="GO:0003746">
    <property type="term" value="F:translation elongation factor activity"/>
    <property type="evidence" value="ECO:0007669"/>
    <property type="project" value="UniProtKB-UniRule"/>
</dbReference>
<dbReference type="GO" id="GO:0032790">
    <property type="term" value="P:ribosome disassembly"/>
    <property type="evidence" value="ECO:0007669"/>
    <property type="project" value="TreeGrafter"/>
</dbReference>
<dbReference type="CDD" id="cd01886">
    <property type="entry name" value="EF-G"/>
    <property type="match status" value="1"/>
</dbReference>
<dbReference type="CDD" id="cd16262">
    <property type="entry name" value="EFG_III"/>
    <property type="match status" value="1"/>
</dbReference>
<dbReference type="CDD" id="cd01434">
    <property type="entry name" value="EFG_mtEFG1_IV"/>
    <property type="match status" value="1"/>
</dbReference>
<dbReference type="CDD" id="cd03713">
    <property type="entry name" value="EFG_mtEFG_C"/>
    <property type="match status" value="1"/>
</dbReference>
<dbReference type="CDD" id="cd04088">
    <property type="entry name" value="EFG_mtEFG_II"/>
    <property type="match status" value="1"/>
</dbReference>
<dbReference type="FunFam" id="2.40.30.10:FF:000006">
    <property type="entry name" value="Elongation factor G"/>
    <property type="match status" value="1"/>
</dbReference>
<dbReference type="FunFam" id="3.30.230.10:FF:000003">
    <property type="entry name" value="Elongation factor G"/>
    <property type="match status" value="1"/>
</dbReference>
<dbReference type="FunFam" id="3.30.70.240:FF:000001">
    <property type="entry name" value="Elongation factor G"/>
    <property type="match status" value="1"/>
</dbReference>
<dbReference type="FunFam" id="3.30.70.870:FF:000001">
    <property type="entry name" value="Elongation factor G"/>
    <property type="match status" value="1"/>
</dbReference>
<dbReference type="FunFam" id="3.40.50.300:FF:000029">
    <property type="entry name" value="Elongation factor G"/>
    <property type="match status" value="1"/>
</dbReference>
<dbReference type="Gene3D" id="3.30.230.10">
    <property type="match status" value="1"/>
</dbReference>
<dbReference type="Gene3D" id="3.30.70.240">
    <property type="match status" value="1"/>
</dbReference>
<dbReference type="Gene3D" id="3.30.70.870">
    <property type="entry name" value="Elongation Factor G (Translational Gtpase), domain 3"/>
    <property type="match status" value="1"/>
</dbReference>
<dbReference type="Gene3D" id="3.40.50.300">
    <property type="entry name" value="P-loop containing nucleotide triphosphate hydrolases"/>
    <property type="match status" value="1"/>
</dbReference>
<dbReference type="Gene3D" id="2.40.30.10">
    <property type="entry name" value="Translation factors"/>
    <property type="match status" value="1"/>
</dbReference>
<dbReference type="HAMAP" id="MF_00054_B">
    <property type="entry name" value="EF_G_EF_2_B"/>
    <property type="match status" value="1"/>
</dbReference>
<dbReference type="InterPro" id="IPR041095">
    <property type="entry name" value="EFG_II"/>
</dbReference>
<dbReference type="InterPro" id="IPR009022">
    <property type="entry name" value="EFG_III"/>
</dbReference>
<dbReference type="InterPro" id="IPR035647">
    <property type="entry name" value="EFG_III/V"/>
</dbReference>
<dbReference type="InterPro" id="IPR047872">
    <property type="entry name" value="EFG_IV"/>
</dbReference>
<dbReference type="InterPro" id="IPR035649">
    <property type="entry name" value="EFG_V"/>
</dbReference>
<dbReference type="InterPro" id="IPR000640">
    <property type="entry name" value="EFG_V-like"/>
</dbReference>
<dbReference type="InterPro" id="IPR004161">
    <property type="entry name" value="EFTu-like_2"/>
</dbReference>
<dbReference type="InterPro" id="IPR031157">
    <property type="entry name" value="G_TR_CS"/>
</dbReference>
<dbReference type="InterPro" id="IPR027417">
    <property type="entry name" value="P-loop_NTPase"/>
</dbReference>
<dbReference type="InterPro" id="IPR020568">
    <property type="entry name" value="Ribosomal_Su5_D2-typ_SF"/>
</dbReference>
<dbReference type="InterPro" id="IPR014721">
    <property type="entry name" value="Ribsml_uS5_D2-typ_fold_subgr"/>
</dbReference>
<dbReference type="InterPro" id="IPR005225">
    <property type="entry name" value="Small_GTP-bd"/>
</dbReference>
<dbReference type="InterPro" id="IPR000795">
    <property type="entry name" value="T_Tr_GTP-bd_dom"/>
</dbReference>
<dbReference type="InterPro" id="IPR009000">
    <property type="entry name" value="Transl_B-barrel_sf"/>
</dbReference>
<dbReference type="InterPro" id="IPR004540">
    <property type="entry name" value="Transl_elong_EFG/EF2"/>
</dbReference>
<dbReference type="InterPro" id="IPR005517">
    <property type="entry name" value="Transl_elong_EFG/EF2_IV"/>
</dbReference>
<dbReference type="NCBIfam" id="TIGR00484">
    <property type="entry name" value="EF-G"/>
    <property type="match status" value="1"/>
</dbReference>
<dbReference type="NCBIfam" id="NF009381">
    <property type="entry name" value="PRK12740.1-5"/>
    <property type="match status" value="1"/>
</dbReference>
<dbReference type="NCBIfam" id="TIGR00231">
    <property type="entry name" value="small_GTP"/>
    <property type="match status" value="1"/>
</dbReference>
<dbReference type="PANTHER" id="PTHR43261:SF1">
    <property type="entry name" value="RIBOSOME-RELEASING FACTOR 2, MITOCHONDRIAL"/>
    <property type="match status" value="1"/>
</dbReference>
<dbReference type="PANTHER" id="PTHR43261">
    <property type="entry name" value="TRANSLATION ELONGATION FACTOR G-RELATED"/>
    <property type="match status" value="1"/>
</dbReference>
<dbReference type="Pfam" id="PF00679">
    <property type="entry name" value="EFG_C"/>
    <property type="match status" value="1"/>
</dbReference>
<dbReference type="Pfam" id="PF14492">
    <property type="entry name" value="EFG_III"/>
    <property type="match status" value="1"/>
</dbReference>
<dbReference type="Pfam" id="PF03764">
    <property type="entry name" value="EFG_IV"/>
    <property type="match status" value="1"/>
</dbReference>
<dbReference type="Pfam" id="PF00009">
    <property type="entry name" value="GTP_EFTU"/>
    <property type="match status" value="1"/>
</dbReference>
<dbReference type="Pfam" id="PF03144">
    <property type="entry name" value="GTP_EFTU_D2"/>
    <property type="match status" value="1"/>
</dbReference>
<dbReference type="PRINTS" id="PR00315">
    <property type="entry name" value="ELONGATNFCT"/>
</dbReference>
<dbReference type="SMART" id="SM00838">
    <property type="entry name" value="EFG_C"/>
    <property type="match status" value="1"/>
</dbReference>
<dbReference type="SMART" id="SM00889">
    <property type="entry name" value="EFG_IV"/>
    <property type="match status" value="1"/>
</dbReference>
<dbReference type="SUPFAM" id="SSF54980">
    <property type="entry name" value="EF-G C-terminal domain-like"/>
    <property type="match status" value="2"/>
</dbReference>
<dbReference type="SUPFAM" id="SSF52540">
    <property type="entry name" value="P-loop containing nucleoside triphosphate hydrolases"/>
    <property type="match status" value="1"/>
</dbReference>
<dbReference type="SUPFAM" id="SSF54211">
    <property type="entry name" value="Ribosomal protein S5 domain 2-like"/>
    <property type="match status" value="1"/>
</dbReference>
<dbReference type="SUPFAM" id="SSF50447">
    <property type="entry name" value="Translation proteins"/>
    <property type="match status" value="1"/>
</dbReference>
<dbReference type="PROSITE" id="PS00301">
    <property type="entry name" value="G_TR_1"/>
    <property type="match status" value="1"/>
</dbReference>
<dbReference type="PROSITE" id="PS51722">
    <property type="entry name" value="G_TR_2"/>
    <property type="match status" value="1"/>
</dbReference>